<gene>
    <name type="primary">Psmb9</name>
    <name type="synonym">Lmp2</name>
    <name type="synonym">Ring12</name>
</gene>
<organism>
    <name type="scientific">Mus terricolor</name>
    <name type="common">Earth-colored mouse</name>
    <name type="synonym">Mus dunni</name>
    <dbReference type="NCBI Taxonomy" id="254704"/>
    <lineage>
        <taxon>Eukaryota</taxon>
        <taxon>Metazoa</taxon>
        <taxon>Chordata</taxon>
        <taxon>Craniata</taxon>
        <taxon>Vertebrata</taxon>
        <taxon>Euteleostomi</taxon>
        <taxon>Mammalia</taxon>
        <taxon>Eutheria</taxon>
        <taxon>Euarchontoglires</taxon>
        <taxon>Glires</taxon>
        <taxon>Rodentia</taxon>
        <taxon>Myomorpha</taxon>
        <taxon>Muroidea</taxon>
        <taxon>Muridae</taxon>
        <taxon>Murinae</taxon>
        <taxon>Mus</taxon>
        <taxon>Mus</taxon>
    </lineage>
</organism>
<accession>O35521</accession>
<dbReference type="EC" id="3.4.25.1"/>
<dbReference type="EMBL" id="D44455">
    <property type="protein sequence ID" value="BAA22576.1"/>
    <property type="molecule type" value="mRNA"/>
</dbReference>
<dbReference type="SMR" id="O35521"/>
<dbReference type="MEROPS" id="T01.013"/>
<dbReference type="MGI" id="MGI:1346526">
    <property type="gene designation" value="Psmb9"/>
</dbReference>
<dbReference type="GO" id="GO:0005829">
    <property type="term" value="C:cytosol"/>
    <property type="evidence" value="ECO:0007669"/>
    <property type="project" value="UniProtKB-ARBA"/>
</dbReference>
<dbReference type="GO" id="GO:0005654">
    <property type="term" value="C:nucleoplasm"/>
    <property type="evidence" value="ECO:0007669"/>
    <property type="project" value="UniProtKB-ARBA"/>
</dbReference>
<dbReference type="GO" id="GO:0005839">
    <property type="term" value="C:proteasome core complex"/>
    <property type="evidence" value="ECO:0000250"/>
    <property type="project" value="UniProtKB"/>
</dbReference>
<dbReference type="GO" id="GO:0019774">
    <property type="term" value="C:proteasome core complex, beta-subunit complex"/>
    <property type="evidence" value="ECO:0000250"/>
    <property type="project" value="UniProtKB"/>
</dbReference>
<dbReference type="GO" id="GO:1990111">
    <property type="term" value="C:spermatoproteasome complex"/>
    <property type="evidence" value="ECO:0000250"/>
    <property type="project" value="UniProtKB"/>
</dbReference>
<dbReference type="GO" id="GO:0004298">
    <property type="term" value="F:threonine-type endopeptidase activity"/>
    <property type="evidence" value="ECO:0007669"/>
    <property type="project" value="UniProtKB-KW"/>
</dbReference>
<dbReference type="GO" id="GO:0002376">
    <property type="term" value="P:immune system process"/>
    <property type="evidence" value="ECO:0007669"/>
    <property type="project" value="UniProtKB-KW"/>
</dbReference>
<dbReference type="GO" id="GO:0051603">
    <property type="term" value="P:proteolysis involved in protein catabolic process"/>
    <property type="evidence" value="ECO:0007669"/>
    <property type="project" value="InterPro"/>
</dbReference>
<dbReference type="CDD" id="cd03762">
    <property type="entry name" value="proteasome_beta_type_6"/>
    <property type="match status" value="1"/>
</dbReference>
<dbReference type="FunFam" id="3.60.20.10:FF:000010">
    <property type="entry name" value="Proteasome subunit beta type-1"/>
    <property type="match status" value="1"/>
</dbReference>
<dbReference type="Gene3D" id="3.60.20.10">
    <property type="entry name" value="Glutamine Phosphoribosylpyrophosphate, subunit 1, domain 1"/>
    <property type="match status" value="1"/>
</dbReference>
<dbReference type="InterPro" id="IPR029055">
    <property type="entry name" value="Ntn_hydrolases_N"/>
</dbReference>
<dbReference type="InterPro" id="IPR000243">
    <property type="entry name" value="Pept_T1A_subB"/>
</dbReference>
<dbReference type="InterPro" id="IPR016050">
    <property type="entry name" value="Proteasome_bsu_CS"/>
</dbReference>
<dbReference type="InterPro" id="IPR001353">
    <property type="entry name" value="Proteasome_sua/b"/>
</dbReference>
<dbReference type="InterPro" id="IPR023333">
    <property type="entry name" value="Proteasome_suB-type"/>
</dbReference>
<dbReference type="PANTHER" id="PTHR32194">
    <property type="entry name" value="METALLOPROTEASE TLDD"/>
    <property type="match status" value="1"/>
</dbReference>
<dbReference type="PANTHER" id="PTHR32194:SF12">
    <property type="entry name" value="PROTEASOME SUBUNIT BETA"/>
    <property type="match status" value="1"/>
</dbReference>
<dbReference type="Pfam" id="PF00227">
    <property type="entry name" value="Proteasome"/>
    <property type="match status" value="1"/>
</dbReference>
<dbReference type="PRINTS" id="PR00141">
    <property type="entry name" value="PROTEASOME"/>
</dbReference>
<dbReference type="SUPFAM" id="SSF56235">
    <property type="entry name" value="N-terminal nucleophile aminohydrolases (Ntn hydrolases)"/>
    <property type="match status" value="1"/>
</dbReference>
<dbReference type="PROSITE" id="PS00854">
    <property type="entry name" value="PROTEASOME_BETA_1"/>
    <property type="match status" value="1"/>
</dbReference>
<dbReference type="PROSITE" id="PS51476">
    <property type="entry name" value="PROTEASOME_BETA_2"/>
    <property type="match status" value="1"/>
</dbReference>
<keyword id="KW-0007">Acetylation</keyword>
<keyword id="KW-0963">Cytoplasm</keyword>
<keyword id="KW-0378">Hydrolase</keyword>
<keyword id="KW-0391">Immunity</keyword>
<keyword id="KW-0539">Nucleus</keyword>
<keyword id="KW-0645">Protease</keyword>
<keyword id="KW-0647">Proteasome</keyword>
<keyword id="KW-0888">Threonine protease</keyword>
<keyword id="KW-0865">Zymogen</keyword>
<feature type="propeptide" id="PRO_0000026623" description="Removed in mature form" evidence="1">
    <location>
        <begin position="1"/>
        <end position="20"/>
    </location>
</feature>
<feature type="chain" id="PRO_0000026624" description="Proteasome subunit beta type-9">
    <location>
        <begin position="21"/>
        <end position="219"/>
    </location>
</feature>
<feature type="active site" description="Nucleophile" evidence="1">
    <location>
        <position position="21"/>
    </location>
</feature>
<feature type="site" description="Cleavage; by autolysis" evidence="2">
    <location>
        <begin position="20"/>
        <end position="21"/>
    </location>
</feature>
<feature type="modified residue" description="N6-acetyllysine" evidence="3">
    <location>
        <position position="53"/>
    </location>
</feature>
<feature type="modified residue" description="N6-acetyllysine" evidence="3">
    <location>
        <position position="109"/>
    </location>
</feature>
<evidence type="ECO:0000250" key="1"/>
<evidence type="ECO:0000250" key="2">
    <source>
        <dbReference type="UniProtKB" id="O35955"/>
    </source>
</evidence>
<evidence type="ECO:0000250" key="3">
    <source>
        <dbReference type="UniProtKB" id="P28065"/>
    </source>
</evidence>
<evidence type="ECO:0000255" key="4">
    <source>
        <dbReference type="PROSITE-ProRule" id="PRU00809"/>
    </source>
</evidence>
<reference key="1">
    <citation type="submission" date="1994-12" db="EMBL/GenBank/DDBJ databases">
        <authorList>
            <person name="Mizuno K."/>
            <person name="Saitou N."/>
            <person name="Tsutiya K."/>
            <person name="Sagai T."/>
            <person name="Moriwaki K."/>
            <person name="Shiroishi T."/>
        </authorList>
    </citation>
    <scope>NUCLEOTIDE SEQUENCE [MRNA]</scope>
    <source>
        <tissue>Spleen</tissue>
    </source>
</reference>
<protein>
    <recommendedName>
        <fullName>Proteasome subunit beta type-9</fullName>
        <ecNumber>3.4.25.1</ecNumber>
    </recommendedName>
    <alternativeName>
        <fullName>Low molecular mass protein 2</fullName>
    </alternativeName>
    <alternativeName>
        <fullName>Macropain chain 7</fullName>
    </alternativeName>
    <alternativeName>
        <fullName>Multicatalytic endopeptidase complex chain 7</fullName>
    </alternativeName>
    <alternativeName>
        <fullName>Proteasome chain 7</fullName>
    </alternativeName>
    <alternativeName>
        <fullName>Proteasome subunit beta-1i</fullName>
    </alternativeName>
    <alternativeName>
        <fullName>Really interesting new gene 12 protein</fullName>
    </alternativeName>
</protein>
<proteinExistence type="evidence at protein level"/>
<sequence>MLRAGAPTAGSFRTEEVHTGTTIMAVEFDGGVVVGSDSRVSAGAAVVNRVFDKLSPLHQRIFCALSGSAADAQAIADMAAYQLELHGLELEEPPLVLAAANVVKNISYKYREDLLAHLIVAGWDQREGGQVYGTMGGMLIRQPFTIGGSGSSYIYGYVDAAYKPGMTPEECRRFTTNAITLAMNRDGSSGGVIYLVTITAAGVDHRVILGDELPKFYGE</sequence>
<name>PSB9_MUSTR</name>
<comment type="function">
    <text>The proteasome is a multicatalytic proteinase complex which is characterized by its ability to cleave peptides with Arg, Phe, Tyr, Leu, and Glu adjacent to the leaving group at neutral or slightly basic pH. The proteasome has an ATP-dependent proteolytic activity. This subunit is involved in antigen processing to generate class I binding peptides.</text>
</comment>
<comment type="catalytic activity">
    <reaction>
        <text>Cleavage of peptide bonds with very broad specificity.</text>
        <dbReference type="EC" id="3.4.25.1"/>
    </reaction>
</comment>
<comment type="subunit">
    <text>The 26S proteasome consists of a 20S proteasome core and two 19S regulatory subunits. The 20S proteasome core is composed of 28 subunits that are arranged in four stacked rings, resulting in a barrel-shaped structure. The two end rings are each formed by seven alpha subunits, and the two central rings are each formed by seven beta subunits. The catalytic chamber with the active sites is on the inside of the barrel. Component of the immunoproteasome, where it displaces the equivalent housekeeping subunit PSMB6. Component of the spermatoproteasome, a form of the proteasome specifically found in testis.</text>
</comment>
<comment type="subcellular location">
    <subcellularLocation>
        <location evidence="4">Cytoplasm</location>
    </subcellularLocation>
    <subcellularLocation>
        <location evidence="1">Nucleus</location>
    </subcellularLocation>
</comment>
<comment type="induction">
    <text>Up-regulated by interferon gamma (at protein level).</text>
</comment>
<comment type="PTM">
    <text evidence="2">Autocleaved. The resulting N-terminal Thr residue of the mature subunit is responsible for the nucleophile proteolytic activity.</text>
</comment>
<comment type="miscellaneous">
    <text>Encoded in the MHC class II region.</text>
</comment>
<comment type="similarity">
    <text evidence="4">Belongs to the peptidase T1B family.</text>
</comment>